<reference key="1">
    <citation type="journal article" date="2009" name="Stand. Genomic Sci.">
        <title>Complete genome sequence of Brachybacterium faecium type strain (Schefferle 6-10).</title>
        <authorList>
            <person name="Lapidus A."/>
            <person name="Pukall R."/>
            <person name="Labuttii K."/>
            <person name="Copeland A."/>
            <person name="Del Rio T.G."/>
            <person name="Nolan M."/>
            <person name="Chen F."/>
            <person name="Lucas S."/>
            <person name="Tice H."/>
            <person name="Cheng J.F."/>
            <person name="Bruce D."/>
            <person name="Goodwin L."/>
            <person name="Pitluck S."/>
            <person name="Rohde M."/>
            <person name="Goker M."/>
            <person name="Pati A."/>
            <person name="Ivanova N."/>
            <person name="Mavrommatis K."/>
            <person name="Chen A."/>
            <person name="Palaniappan K."/>
            <person name="D'haeseleer P."/>
            <person name="Chain P."/>
            <person name="Bristow J."/>
            <person name="Eisen J.A."/>
            <person name="Markowitz V."/>
            <person name="Hugenholtz P."/>
            <person name="Kyrpides N.C."/>
            <person name="Klenk H.P."/>
        </authorList>
    </citation>
    <scope>NUCLEOTIDE SEQUENCE [LARGE SCALE GENOMIC DNA]</scope>
    <source>
        <strain>ATCC 43885 / DSM 4810 / JCM 11609 / LMG 19847 / NBRC 14762 / NCIMB 9860 / 6-10</strain>
    </source>
</reference>
<dbReference type="EMBL" id="CP001643">
    <property type="protein sequence ID" value="ACU85445.1"/>
    <property type="molecule type" value="Genomic_DNA"/>
</dbReference>
<dbReference type="RefSeq" id="YP_003155035.1">
    <property type="nucleotide sequence ID" value="NC_013172.1"/>
</dbReference>
<dbReference type="SMR" id="C7MCY8"/>
<dbReference type="STRING" id="446465.Bfae_16180"/>
<dbReference type="KEGG" id="bfa:Bfae_16180"/>
<dbReference type="PATRIC" id="fig|446465.5.peg.1611"/>
<dbReference type="eggNOG" id="ENOG5033A24">
    <property type="taxonomic scope" value="Bacteria"/>
</dbReference>
<dbReference type="HOGENOM" id="CLU_183816_1_0_11"/>
<dbReference type="OrthoDB" id="3254977at2"/>
<dbReference type="UniPathway" id="UPA00997"/>
<dbReference type="Proteomes" id="UP000001919">
    <property type="component" value="Chromosome"/>
</dbReference>
<dbReference type="GO" id="GO:0070628">
    <property type="term" value="F:proteasome binding"/>
    <property type="evidence" value="ECO:0007669"/>
    <property type="project" value="UniProtKB-UniRule"/>
</dbReference>
<dbReference type="GO" id="GO:0031386">
    <property type="term" value="F:protein tag activity"/>
    <property type="evidence" value="ECO:0007669"/>
    <property type="project" value="UniProtKB-UniRule"/>
</dbReference>
<dbReference type="GO" id="GO:0019941">
    <property type="term" value="P:modification-dependent protein catabolic process"/>
    <property type="evidence" value="ECO:0007669"/>
    <property type="project" value="UniProtKB-UniRule"/>
</dbReference>
<dbReference type="GO" id="GO:0010498">
    <property type="term" value="P:proteasomal protein catabolic process"/>
    <property type="evidence" value="ECO:0007669"/>
    <property type="project" value="UniProtKB-UniRule"/>
</dbReference>
<dbReference type="GO" id="GO:0070490">
    <property type="term" value="P:protein pupylation"/>
    <property type="evidence" value="ECO:0007669"/>
    <property type="project" value="UniProtKB-UniRule"/>
</dbReference>
<dbReference type="HAMAP" id="MF_02106">
    <property type="entry name" value="Pup"/>
    <property type="match status" value="1"/>
</dbReference>
<dbReference type="InterPro" id="IPR008515">
    <property type="entry name" value="Ubiquitin-like_Pup"/>
</dbReference>
<dbReference type="NCBIfam" id="TIGR03687">
    <property type="entry name" value="pupylate_cterm"/>
    <property type="match status" value="1"/>
</dbReference>
<dbReference type="Pfam" id="PF05639">
    <property type="entry name" value="Pup"/>
    <property type="match status" value="1"/>
</dbReference>
<protein>
    <recommendedName>
        <fullName evidence="1">Prokaryotic ubiquitin-like protein Pup</fullName>
    </recommendedName>
    <alternativeName>
        <fullName evidence="1">Bacterial ubiquitin-like modifier</fullName>
    </alternativeName>
</protein>
<name>PUP_BRAFD</name>
<organism>
    <name type="scientific">Brachybacterium faecium (strain ATCC 43885 / DSM 4810 / JCM 11609 / LMG 19847 / NBRC 14762 / NCIMB 9860 / 6-10)</name>
    <dbReference type="NCBI Taxonomy" id="446465"/>
    <lineage>
        <taxon>Bacteria</taxon>
        <taxon>Bacillati</taxon>
        <taxon>Actinomycetota</taxon>
        <taxon>Actinomycetes</taxon>
        <taxon>Micrococcales</taxon>
        <taxon>Dermabacteraceae</taxon>
        <taxon>Brachybacterium</taxon>
    </lineage>
</organism>
<accession>C7MCY8</accession>
<evidence type="ECO:0000255" key="1">
    <source>
        <dbReference type="HAMAP-Rule" id="MF_02106"/>
    </source>
</evidence>
<evidence type="ECO:0000256" key="2">
    <source>
        <dbReference type="SAM" id="MobiDB-lite"/>
    </source>
</evidence>
<sequence length="62" mass="6370">MSQQSLNAPGPGAEDGNDPEAVTGGQTFASAQAADDLLDEIDSVLESNAETFVRSFVQKGGQ</sequence>
<proteinExistence type="inferred from homology"/>
<comment type="function">
    <text evidence="1">Protein modifier that is covalently attached to lysine residues of substrate proteins, thereby targeting them for proteasomal degradation. The tagging system is termed pupylation.</text>
</comment>
<comment type="pathway">
    <text evidence="1">Protein degradation; proteasomal Pup-dependent pathway.</text>
</comment>
<comment type="subunit">
    <text evidence="1">Strongly interacts with the proteasome-associated ATPase ARC through a hydrophobic interface; the interacting region of Pup lies in its C-terminal half. There is one Pup binding site per ARC hexamer ring.</text>
</comment>
<comment type="domain">
    <text evidence="1">The N-terminal unstructured half of Pup provides a signal required to initiate unfolding and degradation by the proteasome but is not needed for pupylation, while the C-terminal helical half of Pup interacts with ARC to target proteins to the proteasome.</text>
</comment>
<comment type="PTM">
    <text evidence="1">Is modified by deamidation of its C-terminal glutamine to glutamate by the deamidase Dop, a prerequisite to the subsequent pupylation process.</text>
</comment>
<comment type="similarity">
    <text evidence="1">Belongs to the prokaryotic ubiquitin-like protein family.</text>
</comment>
<feature type="chain" id="PRO_0000395998" description="Prokaryotic ubiquitin-like protein Pup">
    <location>
        <begin position="1"/>
        <end position="62"/>
    </location>
</feature>
<feature type="region of interest" description="Disordered" evidence="2">
    <location>
        <begin position="1"/>
        <end position="29"/>
    </location>
</feature>
<feature type="region of interest" description="ARC ATPase binding" evidence="1">
    <location>
        <begin position="21"/>
        <end position="56"/>
    </location>
</feature>
<feature type="modified residue" description="Deamidated glutamine" evidence="1">
    <location>
        <position position="62"/>
    </location>
</feature>
<feature type="cross-link" description="Isoglutamyl lysine isopeptide (Gln-Lys) (interchain with K-? in acceptor proteins)" evidence="1">
    <location>
        <position position="62"/>
    </location>
</feature>
<gene>
    <name evidence="1" type="primary">pup</name>
    <name type="ordered locus">Bfae_16180</name>
</gene>
<keyword id="KW-1017">Isopeptide bond</keyword>
<keyword id="KW-1185">Reference proteome</keyword>
<keyword id="KW-0833">Ubl conjugation pathway</keyword>